<name>RS23_GILMI</name>
<comment type="subunit">
    <text evidence="2">Component of the 40S small ribosomal subunit.</text>
</comment>
<comment type="subcellular location">
    <subcellularLocation>
        <location evidence="1">Cytoplasm</location>
        <location evidence="1">Cytosol</location>
    </subcellularLocation>
    <subcellularLocation>
        <location evidence="1">Cytoplasm</location>
    </subcellularLocation>
    <subcellularLocation>
        <location evidence="2">Rough endoplasmic reticulum</location>
    </subcellularLocation>
    <text evidence="1 2">Detected on cytosolic polysomes (By similarity). Detected in ribosomes that are associated with the rough endoplasmic reticulum (By similarity).</text>
</comment>
<comment type="similarity">
    <text evidence="3">Belongs to the universal ribosomal protein uS12 family.</text>
</comment>
<feature type="chain" id="PRO_0000146461" description="Small ribosomal subunit protein uS12">
    <location>
        <begin position="1"/>
        <end position="143"/>
    </location>
</feature>
<protein>
    <recommendedName>
        <fullName evidence="3">Small ribosomal subunit protein uS12</fullName>
    </recommendedName>
    <alternativeName>
        <fullName>40S ribosomal protein S23</fullName>
    </alternativeName>
</protein>
<proteinExistence type="evidence at transcript level"/>
<accession>Q9DFR4</accession>
<dbReference type="EMBL" id="AF266168">
    <property type="protein sequence ID" value="AAG13288.1"/>
    <property type="molecule type" value="mRNA"/>
</dbReference>
<dbReference type="GO" id="GO:0022627">
    <property type="term" value="C:cytosolic small ribosomal subunit"/>
    <property type="evidence" value="ECO:0000250"/>
    <property type="project" value="UniProtKB"/>
</dbReference>
<dbReference type="GO" id="GO:0005791">
    <property type="term" value="C:rough endoplasmic reticulum"/>
    <property type="evidence" value="ECO:0007669"/>
    <property type="project" value="UniProtKB-SubCell"/>
</dbReference>
<dbReference type="GO" id="GO:0003735">
    <property type="term" value="F:structural constituent of ribosome"/>
    <property type="evidence" value="ECO:0007669"/>
    <property type="project" value="InterPro"/>
</dbReference>
<dbReference type="GO" id="GO:0002181">
    <property type="term" value="P:cytoplasmic translation"/>
    <property type="evidence" value="ECO:0000250"/>
    <property type="project" value="UniProtKB"/>
</dbReference>
<dbReference type="CDD" id="cd03367">
    <property type="entry name" value="Ribosomal_S23"/>
    <property type="match status" value="1"/>
</dbReference>
<dbReference type="FunFam" id="2.40.50.140:FF:000007">
    <property type="entry name" value="40S ribosomal protein S23"/>
    <property type="match status" value="1"/>
</dbReference>
<dbReference type="Gene3D" id="2.40.50.140">
    <property type="entry name" value="Nucleic acid-binding proteins"/>
    <property type="match status" value="1"/>
</dbReference>
<dbReference type="InterPro" id="IPR012340">
    <property type="entry name" value="NA-bd_OB-fold"/>
</dbReference>
<dbReference type="InterPro" id="IPR006032">
    <property type="entry name" value="Ribosomal_uS12"/>
</dbReference>
<dbReference type="InterPro" id="IPR005680">
    <property type="entry name" value="Ribosomal_uS12_euk/arc"/>
</dbReference>
<dbReference type="NCBIfam" id="TIGR00982">
    <property type="entry name" value="uS12_E_A"/>
    <property type="match status" value="1"/>
</dbReference>
<dbReference type="PANTHER" id="PTHR11652">
    <property type="entry name" value="30S RIBOSOMAL PROTEIN S12 FAMILY MEMBER"/>
    <property type="match status" value="1"/>
</dbReference>
<dbReference type="Pfam" id="PF00164">
    <property type="entry name" value="Ribosom_S12_S23"/>
    <property type="match status" value="1"/>
</dbReference>
<dbReference type="PIRSF" id="PIRSF002133">
    <property type="entry name" value="Ribosomal_S12/S23"/>
    <property type="match status" value="1"/>
</dbReference>
<dbReference type="SUPFAM" id="SSF50249">
    <property type="entry name" value="Nucleic acid-binding proteins"/>
    <property type="match status" value="1"/>
</dbReference>
<dbReference type="PROSITE" id="PS00055">
    <property type="entry name" value="RIBOSOMAL_S12"/>
    <property type="match status" value="1"/>
</dbReference>
<evidence type="ECO:0000250" key="1">
    <source>
        <dbReference type="UniProtKB" id="P62266"/>
    </source>
</evidence>
<evidence type="ECO:0000250" key="2">
    <source>
        <dbReference type="UniProtKB" id="Q6SA96"/>
    </source>
</evidence>
<evidence type="ECO:0000305" key="3"/>
<organism>
    <name type="scientific">Gillichthys mirabilis</name>
    <name type="common">Long-jawed mudsucker</name>
    <dbReference type="NCBI Taxonomy" id="8222"/>
    <lineage>
        <taxon>Eukaryota</taxon>
        <taxon>Metazoa</taxon>
        <taxon>Chordata</taxon>
        <taxon>Craniata</taxon>
        <taxon>Vertebrata</taxon>
        <taxon>Euteleostomi</taxon>
        <taxon>Actinopterygii</taxon>
        <taxon>Neopterygii</taxon>
        <taxon>Teleostei</taxon>
        <taxon>Neoteleostei</taxon>
        <taxon>Acanthomorphata</taxon>
        <taxon>Gobiaria</taxon>
        <taxon>Gobiiformes</taxon>
        <taxon>Gobioidei</taxon>
        <taxon>Gobiidae</taxon>
        <taxon>Gobionellinae</taxon>
        <taxon>Gillichthys</taxon>
    </lineage>
</organism>
<gene>
    <name type="primary">rps23</name>
</gene>
<keyword id="KW-0963">Cytoplasm</keyword>
<keyword id="KW-0256">Endoplasmic reticulum</keyword>
<keyword id="KW-0687">Ribonucleoprotein</keyword>
<keyword id="KW-0689">Ribosomal protein</keyword>
<sequence>MGKCRGLRTARKLRNHRREQKWHDKQYKKAHLGTALKANPFGSASHAKGIVLEKVGVEAKQPNSAIRKCVRVQLIKNGKKITAFVPNDGCLNFXEENDEVLVAGFGRKXHAVGDIPGVRFKVVEMANVSLLALYKGXKERPKS</sequence>
<reference key="1">
    <citation type="journal article" date="2001" name="Proc. Natl. Acad. Sci. U.S.A.">
        <title>Hypoxia-induced gene expression profiling in the euryoxic fish Gillichthys mirabilis.</title>
        <authorList>
            <person name="Gracey A.Y."/>
            <person name="Troll J.V."/>
            <person name="Somero G.N."/>
        </authorList>
    </citation>
    <scope>NUCLEOTIDE SEQUENCE [MRNA]</scope>
    <source>
        <tissue>Liver</tissue>
    </source>
</reference>